<dbReference type="EMBL" id="BX897699">
    <property type="protein sequence ID" value="CAF27421.1"/>
    <property type="status" value="ALT_INIT"/>
    <property type="molecule type" value="Genomic_DNA"/>
</dbReference>
<dbReference type="SMR" id="Q6G5D4"/>
<dbReference type="PaxDb" id="283166-BH06170"/>
<dbReference type="EnsemblBacteria" id="CAF27421">
    <property type="protein sequence ID" value="CAF27421"/>
    <property type="gene ID" value="BH06170"/>
</dbReference>
<dbReference type="KEGG" id="bhe:BH06170"/>
<dbReference type="eggNOG" id="COG2127">
    <property type="taxonomic scope" value="Bacteria"/>
</dbReference>
<dbReference type="Proteomes" id="UP000000421">
    <property type="component" value="Chromosome"/>
</dbReference>
<dbReference type="GO" id="GO:0030163">
    <property type="term" value="P:protein catabolic process"/>
    <property type="evidence" value="ECO:0007669"/>
    <property type="project" value="InterPro"/>
</dbReference>
<dbReference type="GO" id="GO:0006508">
    <property type="term" value="P:proteolysis"/>
    <property type="evidence" value="ECO:0007669"/>
    <property type="project" value="UniProtKB-UniRule"/>
</dbReference>
<dbReference type="FunFam" id="3.30.1390.10:FF:000002">
    <property type="entry name" value="ATP-dependent Clp protease adapter protein ClpS"/>
    <property type="match status" value="1"/>
</dbReference>
<dbReference type="Gene3D" id="3.30.1390.10">
    <property type="match status" value="1"/>
</dbReference>
<dbReference type="HAMAP" id="MF_00302">
    <property type="entry name" value="ClpS"/>
    <property type="match status" value="1"/>
</dbReference>
<dbReference type="InterPro" id="IPR022935">
    <property type="entry name" value="ClpS"/>
</dbReference>
<dbReference type="InterPro" id="IPR003769">
    <property type="entry name" value="ClpS_core"/>
</dbReference>
<dbReference type="InterPro" id="IPR014719">
    <property type="entry name" value="Ribosomal_bL12_C/ClpS-like"/>
</dbReference>
<dbReference type="NCBIfam" id="NF000672">
    <property type="entry name" value="PRK00033.1-5"/>
    <property type="match status" value="1"/>
</dbReference>
<dbReference type="PANTHER" id="PTHR33473:SF19">
    <property type="entry name" value="ATP-DEPENDENT CLP PROTEASE ADAPTER PROTEIN CLPS"/>
    <property type="match status" value="1"/>
</dbReference>
<dbReference type="PANTHER" id="PTHR33473">
    <property type="entry name" value="ATP-DEPENDENT CLP PROTEASE ADAPTER PROTEIN CLPS1, CHLOROPLASTIC"/>
    <property type="match status" value="1"/>
</dbReference>
<dbReference type="Pfam" id="PF02617">
    <property type="entry name" value="ClpS"/>
    <property type="match status" value="1"/>
</dbReference>
<dbReference type="SUPFAM" id="SSF54736">
    <property type="entry name" value="ClpS-like"/>
    <property type="match status" value="1"/>
</dbReference>
<feature type="chain" id="PRO_0000215684" description="ATP-dependent Clp protease adapter protein ClpS">
    <location>
        <begin position="1"/>
        <end position="110"/>
    </location>
</feature>
<sequence>MHNEKGKNGDEYRHDAFIMPKMRSKLQKPKLYRVLLLDDDYTPMDFVIFVLKSFFKKNFEEAMHIMLSVHQNGVGECGIYNYEVAEMKIIQVRECARQNEHPLQCVMEWK</sequence>
<gene>
    <name evidence="1" type="primary">clpS</name>
    <name type="ordered locus">BH06170</name>
</gene>
<evidence type="ECO:0000255" key="1">
    <source>
        <dbReference type="HAMAP-Rule" id="MF_00302"/>
    </source>
</evidence>
<evidence type="ECO:0000305" key="2"/>
<organism>
    <name type="scientific">Bartonella henselae (strain ATCC 49882 / DSM 28221 / CCUG 30454 / Houston 1)</name>
    <name type="common">Rochalimaea henselae</name>
    <dbReference type="NCBI Taxonomy" id="283166"/>
    <lineage>
        <taxon>Bacteria</taxon>
        <taxon>Pseudomonadati</taxon>
        <taxon>Pseudomonadota</taxon>
        <taxon>Alphaproteobacteria</taxon>
        <taxon>Hyphomicrobiales</taxon>
        <taxon>Bartonellaceae</taxon>
        <taxon>Bartonella</taxon>
    </lineage>
</organism>
<proteinExistence type="inferred from homology"/>
<reference key="1">
    <citation type="journal article" date="2004" name="Proc. Natl. Acad. Sci. U.S.A.">
        <title>The louse-borne human pathogen Bartonella quintana is a genomic derivative of the zoonotic agent Bartonella henselae.</title>
        <authorList>
            <person name="Alsmark U.C.M."/>
            <person name="Frank A.C."/>
            <person name="Karlberg E.O."/>
            <person name="Legault B.-A."/>
            <person name="Ardell D.H."/>
            <person name="Canbaeck B."/>
            <person name="Eriksson A.-S."/>
            <person name="Naeslund A.K."/>
            <person name="Handley S.A."/>
            <person name="Huvet M."/>
            <person name="La Scola B."/>
            <person name="Holmberg M."/>
            <person name="Andersson S.G.E."/>
        </authorList>
    </citation>
    <scope>NUCLEOTIDE SEQUENCE [LARGE SCALE GENOMIC DNA]</scope>
    <source>
        <strain>ATCC 49882 / DSM 28221 / CCUG 30454 / Houston 1</strain>
    </source>
</reference>
<protein>
    <recommendedName>
        <fullName evidence="1">ATP-dependent Clp protease adapter protein ClpS</fullName>
    </recommendedName>
</protein>
<name>CLPS_BARHE</name>
<accession>Q6G5D4</accession>
<comment type="function">
    <text evidence="1">Involved in the modulation of the specificity of the ClpAP-mediated ATP-dependent protein degradation.</text>
</comment>
<comment type="subunit">
    <text evidence="1">Binds to the N-terminal domain of the chaperone ClpA.</text>
</comment>
<comment type="similarity">
    <text evidence="1">Belongs to the ClpS family.</text>
</comment>
<comment type="sequence caution" evidence="2">
    <conflict type="erroneous initiation">
        <sequence resource="EMBL-CDS" id="CAF27421"/>
    </conflict>
</comment>